<comment type="function">
    <text evidence="1">Catalyzes the non-heme iron(II)-dependent oxidative cleavage of 2,3-dihydroxyphenylpropionic acid and 2,3-dihydroxicinnamic acid into 2-hydroxy-6-ketononadienedioate and 2-hydroxy-6-ketononatrienedioate, respectively.</text>
</comment>
<comment type="catalytic activity">
    <reaction evidence="1">
        <text>3-(2,3-dihydroxyphenyl)propanoate + O2 = (2Z,4E)-2-hydroxy-6-oxonona-2,4-dienedioate + H(+)</text>
        <dbReference type="Rhea" id="RHEA:23840"/>
        <dbReference type="ChEBI" id="CHEBI:15378"/>
        <dbReference type="ChEBI" id="CHEBI:15379"/>
        <dbReference type="ChEBI" id="CHEBI:46951"/>
        <dbReference type="ChEBI" id="CHEBI:66887"/>
        <dbReference type="EC" id="1.13.11.16"/>
    </reaction>
</comment>
<comment type="catalytic activity">
    <reaction evidence="1">
        <text>(2E)-3-(2,3-dihydroxyphenyl)prop-2-enoate + O2 = (2Z,4E,7E)-2-hydroxy-6-oxonona-2,4,7-trienedioate + H(+)</text>
        <dbReference type="Rhea" id="RHEA:25054"/>
        <dbReference type="ChEBI" id="CHEBI:15378"/>
        <dbReference type="ChEBI" id="CHEBI:15379"/>
        <dbReference type="ChEBI" id="CHEBI:58642"/>
        <dbReference type="ChEBI" id="CHEBI:66888"/>
        <dbReference type="EC" id="1.13.11.16"/>
    </reaction>
</comment>
<comment type="cofactor">
    <cofactor evidence="1">
        <name>Fe(2+)</name>
        <dbReference type="ChEBI" id="CHEBI:29033"/>
    </cofactor>
</comment>
<comment type="pathway">
    <text evidence="1">Aromatic compound metabolism; 3-phenylpropanoate degradation.</text>
</comment>
<comment type="subunit">
    <text evidence="1">Homotetramer.</text>
</comment>
<comment type="similarity">
    <text evidence="1">Belongs to the LigB/MhpB extradiol dioxygenase family.</text>
</comment>
<comment type="sequence caution" evidence="2">
    <conflict type="erroneous initiation">
        <sequence resource="EMBL-CDS" id="ABG09891"/>
    </conflict>
</comment>
<protein>
    <recommendedName>
        <fullName evidence="1">2,3-dihydroxyphenylpropionate/2,3-dihydroxicinnamic acid 1,2-dioxygenase</fullName>
        <ecNumber evidence="1">1.13.11.16</ecNumber>
    </recommendedName>
    <alternativeName>
        <fullName evidence="1">3-carboxyethylcatechol 2,3-dioxygenase</fullName>
    </alternativeName>
</protein>
<gene>
    <name evidence="1" type="primary">mhpB</name>
    <name type="ordered locus">Mmcs_3785</name>
</gene>
<keyword id="KW-0058">Aromatic hydrocarbons catabolism</keyword>
<keyword id="KW-0223">Dioxygenase</keyword>
<keyword id="KW-0408">Iron</keyword>
<keyword id="KW-0560">Oxidoreductase</keyword>
<dbReference type="EC" id="1.13.11.16" evidence="1"/>
<dbReference type="EMBL" id="CP000384">
    <property type="protein sequence ID" value="ABG09891.1"/>
    <property type="status" value="ALT_INIT"/>
    <property type="molecule type" value="Genomic_DNA"/>
</dbReference>
<dbReference type="SMR" id="Q1B5E3"/>
<dbReference type="KEGG" id="mmc:Mmcs_3785"/>
<dbReference type="HOGENOM" id="CLU_078149_0_0_11"/>
<dbReference type="BioCyc" id="MSP164756:G1G6O-3863-MONOMER"/>
<dbReference type="UniPathway" id="UPA00714"/>
<dbReference type="GO" id="GO:0047070">
    <property type="term" value="F:3-carboxyethylcatechol 2,3-dioxygenase activity"/>
    <property type="evidence" value="ECO:0007669"/>
    <property type="project" value="UniProtKB-UniRule"/>
</dbReference>
<dbReference type="GO" id="GO:0008198">
    <property type="term" value="F:ferrous iron binding"/>
    <property type="evidence" value="ECO:0007669"/>
    <property type="project" value="InterPro"/>
</dbReference>
<dbReference type="GO" id="GO:0019380">
    <property type="term" value="P:3-phenylpropionate catabolic process"/>
    <property type="evidence" value="ECO:0007669"/>
    <property type="project" value="UniProtKB-UniRule"/>
</dbReference>
<dbReference type="Gene3D" id="3.40.830.10">
    <property type="entry name" value="LigB-like"/>
    <property type="match status" value="1"/>
</dbReference>
<dbReference type="HAMAP" id="MF_01653">
    <property type="entry name" value="MhpB"/>
    <property type="match status" value="1"/>
</dbReference>
<dbReference type="InterPro" id="IPR023789">
    <property type="entry name" value="DHPP/DHXA_dioxygenase"/>
</dbReference>
<dbReference type="InterPro" id="IPR004183">
    <property type="entry name" value="Xdiol_dOase_suB"/>
</dbReference>
<dbReference type="NCBIfam" id="NF009910">
    <property type="entry name" value="PRK13370.1-4"/>
    <property type="match status" value="1"/>
</dbReference>
<dbReference type="Pfam" id="PF02900">
    <property type="entry name" value="LigB"/>
    <property type="match status" value="1"/>
</dbReference>
<dbReference type="SUPFAM" id="SSF53213">
    <property type="entry name" value="LigB-like"/>
    <property type="match status" value="1"/>
</dbReference>
<organism>
    <name type="scientific">Mycobacterium sp. (strain MCS)</name>
    <dbReference type="NCBI Taxonomy" id="164756"/>
    <lineage>
        <taxon>Bacteria</taxon>
        <taxon>Bacillati</taxon>
        <taxon>Actinomycetota</taxon>
        <taxon>Actinomycetes</taxon>
        <taxon>Mycobacteriales</taxon>
        <taxon>Mycobacteriaceae</taxon>
        <taxon>Mycobacterium</taxon>
    </lineage>
</organism>
<name>MHPB_MYCSS</name>
<evidence type="ECO:0000255" key="1">
    <source>
        <dbReference type="HAMAP-Rule" id="MF_01653"/>
    </source>
</evidence>
<evidence type="ECO:0000305" key="2"/>
<feature type="chain" id="PRO_0000337658" description="2,3-dihydroxyphenylpropionate/2,3-dihydroxicinnamic acid 1,2-dioxygenase">
    <location>
        <begin position="1"/>
        <end position="313"/>
    </location>
</feature>
<feature type="active site" description="Proton donor" evidence="1">
    <location>
        <position position="116"/>
    </location>
</feature>
<feature type="active site" description="Proton acceptor" evidence="1">
    <location>
        <position position="180"/>
    </location>
</feature>
<proteinExistence type="inferred from homology"/>
<reference key="1">
    <citation type="submission" date="2006-06" db="EMBL/GenBank/DDBJ databases">
        <title>Complete sequence of chromosome of Mycobacterium sp. MCS.</title>
        <authorList>
            <consortium name="US DOE Joint Genome Institute"/>
            <person name="Copeland A."/>
            <person name="Lucas S."/>
            <person name="Lapidus A."/>
            <person name="Barry K."/>
            <person name="Detter J.C."/>
            <person name="Glavina del Rio T."/>
            <person name="Hammon N."/>
            <person name="Israni S."/>
            <person name="Dalin E."/>
            <person name="Tice H."/>
            <person name="Pitluck S."/>
            <person name="Martinez M."/>
            <person name="Schmutz J."/>
            <person name="Larimer F."/>
            <person name="Land M."/>
            <person name="Hauser L."/>
            <person name="Kyrpides N."/>
            <person name="Kim E."/>
            <person name="Miller C.D."/>
            <person name="Hughes J.E."/>
            <person name="Anderson A.J."/>
            <person name="Sims R.C."/>
            <person name="Richardson P."/>
        </authorList>
    </citation>
    <scope>NUCLEOTIDE SEQUENCE [LARGE SCALE GENOMIC DNA]</scope>
    <source>
        <strain>MCS</strain>
    </source>
</reference>
<sequence length="313" mass="33047">MAQIALCCTSHSPLLNLPGPSRELLDDIGSALAVARDFVTEFDPDLVVTFSPDHYNGFFYKVMPPFCVGTSAQGVGDYGTHAGPLDVPEDLANELATAVLEAGVDVAISASMDVDHGTVQPLQNLFGDAMARPVIPVFINSVATPLGPLRRTRALGTAIGRYLATLDKRVLVIGSGGLSHDPPVPTLATAPPAALDRIVHGAPMSTEQRMARQSAVIDAAHAFAHGESPLQPLNPAWDATFLEILDEGWLSDLDGWSNAFIAREGGNSAHEIRTWVAAFAALAAGGDYRTGLRFYRAAPELIAGFAIRTAVLA</sequence>
<accession>Q1B5E3</accession>